<sequence>MVDVSDKVETKRTAVAEGRVVMRPETLALVIAGRAGKGDVLGIARVAGIMAAKRTADPKNSKSFSRVLLERPRAHSI</sequence>
<feature type="chain" id="PRO_0000097823" description="Cyclic pyranopterin monophosphate synthase">
    <location>
        <begin position="1"/>
        <end position="77" status="greater than"/>
    </location>
</feature>
<feature type="non-terminal residue">
    <location>
        <position position="77"/>
    </location>
</feature>
<protein>
    <recommendedName>
        <fullName evidence="1">Cyclic pyranopterin monophosphate synthase</fullName>
        <ecNumber evidence="1">4.6.1.17</ecNumber>
    </recommendedName>
    <alternativeName>
        <fullName evidence="1">Molybdenum cofactor biosynthesis protein C</fullName>
    </alternativeName>
</protein>
<dbReference type="EC" id="4.6.1.17" evidence="1"/>
<dbReference type="EMBL" id="AF128444">
    <property type="protein sequence ID" value="AAD21204.1"/>
    <property type="molecule type" value="Genomic_DNA"/>
</dbReference>
<dbReference type="SMR" id="Q9X5W6"/>
<dbReference type="UniPathway" id="UPA00344"/>
<dbReference type="GO" id="GO:0061799">
    <property type="term" value="F:cyclic pyranopterin monophosphate synthase activity"/>
    <property type="evidence" value="ECO:0007669"/>
    <property type="project" value="UniProtKB-EC"/>
</dbReference>
<dbReference type="GO" id="GO:0006777">
    <property type="term" value="P:Mo-molybdopterin cofactor biosynthetic process"/>
    <property type="evidence" value="ECO:0007669"/>
    <property type="project" value="UniProtKB-KW"/>
</dbReference>
<dbReference type="Gene3D" id="3.30.70.640">
    <property type="entry name" value="Molybdopterin cofactor biosynthesis C (MoaC) domain"/>
    <property type="match status" value="1"/>
</dbReference>
<dbReference type="InterPro" id="IPR036522">
    <property type="entry name" value="MoaC_sf"/>
</dbReference>
<dbReference type="InterPro" id="IPR002820">
    <property type="entry name" value="Mopterin_CF_biosynth-C_dom"/>
</dbReference>
<dbReference type="Pfam" id="PF01967">
    <property type="entry name" value="MoaC"/>
    <property type="match status" value="1"/>
</dbReference>
<dbReference type="SUPFAM" id="SSF55040">
    <property type="entry name" value="Molybdenum cofactor biosynthesis protein C, MoaC"/>
    <property type="match status" value="1"/>
</dbReference>
<organism>
    <name type="scientific">Rhodobacter capsulatus</name>
    <name type="common">Rhodopseudomonas capsulata</name>
    <dbReference type="NCBI Taxonomy" id="1061"/>
    <lineage>
        <taxon>Bacteria</taxon>
        <taxon>Pseudomonadati</taxon>
        <taxon>Pseudomonadota</taxon>
        <taxon>Alphaproteobacteria</taxon>
        <taxon>Rhodobacterales</taxon>
        <taxon>Rhodobacter group</taxon>
        <taxon>Rhodobacter</taxon>
    </lineage>
</organism>
<evidence type="ECO:0000250" key="1">
    <source>
        <dbReference type="UniProtKB" id="P0A738"/>
    </source>
</evidence>
<evidence type="ECO:0000305" key="2"/>
<keyword id="KW-0456">Lyase</keyword>
<keyword id="KW-0501">Molybdenum cofactor biosynthesis</keyword>
<reference key="1">
    <citation type="journal article" date="1999" name="Microbiology">
        <title>Characterization of a molybdenum cofactor biosynthetic gene cluster in Rhodobacter capsulatus which is specific for the biogenesis of dimethylsulfoxide reductase.</title>
        <authorList>
            <person name="Solomon P.S."/>
            <person name="Shaw A.L."/>
            <person name="Lane I."/>
            <person name="Hanson G.R."/>
            <person name="Palmer T."/>
            <person name="McEwan A.G."/>
        </authorList>
    </citation>
    <scope>NUCLEOTIDE SEQUENCE [GENOMIC DNA]</scope>
    <source>
        <strain>DSM 938 / 37b4</strain>
    </source>
</reference>
<comment type="function">
    <text evidence="1">Catalyzes the conversion of (8S)-3',8-cyclo-7,8-dihydroguanosine 5'-triphosphate to cyclic pyranopterin monophosphate (cPMP).</text>
</comment>
<comment type="catalytic activity">
    <reaction evidence="1">
        <text>(8S)-3',8-cyclo-7,8-dihydroguanosine 5'-triphosphate = cyclic pyranopterin phosphate + diphosphate</text>
        <dbReference type="Rhea" id="RHEA:49580"/>
        <dbReference type="ChEBI" id="CHEBI:33019"/>
        <dbReference type="ChEBI" id="CHEBI:59648"/>
        <dbReference type="ChEBI" id="CHEBI:131766"/>
        <dbReference type="EC" id="4.6.1.17"/>
    </reaction>
</comment>
<comment type="pathway">
    <text evidence="1">Cofactor biosynthesis; molybdopterin biosynthesis.</text>
</comment>
<comment type="subunit">
    <text evidence="1">Homohexamer; trimer of dimers.</text>
</comment>
<comment type="miscellaneous">
    <text>Seems to be specific for the biogenesis of DMSO reductase.</text>
</comment>
<comment type="similarity">
    <text evidence="2">Belongs to the MoaC family.</text>
</comment>
<name>MOAC_RHOCA</name>
<proteinExistence type="inferred from homology"/>
<accession>Q9X5W6</accession>
<gene>
    <name type="primary">moaC</name>
</gene>